<comment type="catalytic activity">
    <reaction>
        <text>tRNA(Cys) + L-cysteine + ATP = L-cysteinyl-tRNA(Cys) + AMP + diphosphate</text>
        <dbReference type="Rhea" id="RHEA:17773"/>
        <dbReference type="Rhea" id="RHEA-COMP:9661"/>
        <dbReference type="Rhea" id="RHEA-COMP:9679"/>
        <dbReference type="ChEBI" id="CHEBI:30616"/>
        <dbReference type="ChEBI" id="CHEBI:33019"/>
        <dbReference type="ChEBI" id="CHEBI:35235"/>
        <dbReference type="ChEBI" id="CHEBI:78442"/>
        <dbReference type="ChEBI" id="CHEBI:78517"/>
        <dbReference type="ChEBI" id="CHEBI:456215"/>
        <dbReference type="EC" id="6.1.1.16"/>
    </reaction>
</comment>
<comment type="cofactor">
    <cofactor evidence="1">
        <name>Zn(2+)</name>
        <dbReference type="ChEBI" id="CHEBI:29105"/>
    </cofactor>
    <text evidence="1">Binds 1 zinc ion per subunit.</text>
</comment>
<comment type="similarity">
    <text evidence="2">Belongs to the class-I aminoacyl-tRNA synthetase family.</text>
</comment>
<organismHost>
    <name type="scientific">Acanthamoeba polyphaga</name>
    <name type="common">Amoeba</name>
    <dbReference type="NCBI Taxonomy" id="5757"/>
</organismHost>
<dbReference type="EC" id="6.1.1.16"/>
<dbReference type="EMBL" id="AY653733">
    <property type="protein sequence ID" value="AAV50438.1"/>
    <property type="molecule type" value="Genomic_DNA"/>
</dbReference>
<dbReference type="SMR" id="Q5UP36"/>
<dbReference type="KEGG" id="vg:9924764"/>
<dbReference type="OrthoDB" id="29826at10239"/>
<dbReference type="Proteomes" id="UP000001134">
    <property type="component" value="Genome"/>
</dbReference>
<dbReference type="GO" id="GO:0005524">
    <property type="term" value="F:ATP binding"/>
    <property type="evidence" value="ECO:0007669"/>
    <property type="project" value="UniProtKB-KW"/>
</dbReference>
<dbReference type="GO" id="GO:0004817">
    <property type="term" value="F:cysteine-tRNA ligase activity"/>
    <property type="evidence" value="ECO:0007669"/>
    <property type="project" value="UniProtKB-EC"/>
</dbReference>
<dbReference type="GO" id="GO:0046872">
    <property type="term" value="F:metal ion binding"/>
    <property type="evidence" value="ECO:0007669"/>
    <property type="project" value="UniProtKB-KW"/>
</dbReference>
<dbReference type="Gene3D" id="3.40.50.620">
    <property type="entry name" value="HUPs"/>
    <property type="match status" value="1"/>
</dbReference>
<dbReference type="InterPro" id="IPR024909">
    <property type="entry name" value="Cys-tRNA/MSH_ligase"/>
</dbReference>
<dbReference type="InterPro" id="IPR014729">
    <property type="entry name" value="Rossmann-like_a/b/a_fold"/>
</dbReference>
<dbReference type="InterPro" id="IPR032678">
    <property type="entry name" value="tRNA-synt_1_cat_dom"/>
</dbReference>
<dbReference type="InterPro" id="IPR009080">
    <property type="entry name" value="tRNAsynth_Ia_anticodon-bd"/>
</dbReference>
<dbReference type="PANTHER" id="PTHR10890:SF3">
    <property type="entry name" value="CYSTEINE--TRNA LIGASE, CYTOPLASMIC"/>
    <property type="match status" value="1"/>
</dbReference>
<dbReference type="PANTHER" id="PTHR10890">
    <property type="entry name" value="CYSTEINYL-TRNA SYNTHETASE"/>
    <property type="match status" value="1"/>
</dbReference>
<dbReference type="Pfam" id="PF01406">
    <property type="entry name" value="tRNA-synt_1e"/>
    <property type="match status" value="1"/>
</dbReference>
<dbReference type="PRINTS" id="PR00983">
    <property type="entry name" value="TRNASYNTHCYS"/>
</dbReference>
<dbReference type="SUPFAM" id="SSF47323">
    <property type="entry name" value="Anticodon-binding domain of a subclass of class I aminoacyl-tRNA synthetases"/>
    <property type="match status" value="1"/>
</dbReference>
<dbReference type="SUPFAM" id="SSF52374">
    <property type="entry name" value="Nucleotidylyl transferase"/>
    <property type="match status" value="1"/>
</dbReference>
<proteinExistence type="inferred from homology"/>
<sequence>METELSETILPTVTKMYVCGPTVYNDAHIGHARIYVIVDLINRTMNKILNKPTHLVMNVTDIDDKIIRESKNKGITWLELARLHENSFFDCMSKLNVTRPDSVIRVTESISDIVLYIQQIINNGFAYIVSDSSVYFDSIEYKKAGYEFSEIDDEEEQQYESLLSKEIVSQKKHHKDFALWKGRSESDVGFNVEFIFDNQTFKSFGVPGWHIECSAMIKKTLGNSIDIHFGGIDLKFPHHYNECLQANAYHHPMYNPLHQSDTMIFHTWTREFIHVGHLCIKGQKMSKSLKNFSTIKEMLDKINSNQFRWLFMSTKWKQQVDFTDGLISIAKELDFTVVNFVNRVSNYPFEVSDVEFNDKETLLHDDFYRIQQRIYSYLTEFKFEMVARSIQHLIGTTNVYLDLPRPNESIVGKIRDYLLDLLDKLGFIYRVGNSSSSHKIKDLMNILIETRSQLRQLTRNPDLSPGIKKQLFDILDRQRNIQLPDIGIILEDSKDSSLWYENSCVQSSE</sequence>
<organism>
    <name type="scientific">Acanthamoeba polyphaga mimivirus</name>
    <name type="common">APMV</name>
    <dbReference type="NCBI Taxonomy" id="212035"/>
    <lineage>
        <taxon>Viruses</taxon>
        <taxon>Varidnaviria</taxon>
        <taxon>Bamfordvirae</taxon>
        <taxon>Nucleocytoviricota</taxon>
        <taxon>Megaviricetes</taxon>
        <taxon>Imitervirales</taxon>
        <taxon>Mimiviridae</taxon>
        <taxon>Megamimivirinae</taxon>
        <taxon>Mimivirus</taxon>
        <taxon>Mimivirus bradfordmassiliense</taxon>
    </lineage>
</organism>
<evidence type="ECO:0000250" key="1"/>
<evidence type="ECO:0000305" key="2"/>
<protein>
    <recommendedName>
        <fullName>Cysteine--tRNA ligase</fullName>
        <ecNumber>6.1.1.16</ecNumber>
    </recommendedName>
    <alternativeName>
        <fullName>Cysteinyl-tRNA synthetase</fullName>
        <shortName>CysRS</shortName>
    </alternativeName>
</protein>
<name>SYC_MIMIV</name>
<accession>Q5UP36</accession>
<feature type="chain" id="PRO_0000159554" description="Cysteine--tRNA ligase">
    <location>
        <begin position="1"/>
        <end position="509"/>
    </location>
</feature>
<feature type="short sequence motif" description="'HIGH' region">
    <location>
        <begin position="21"/>
        <end position="31"/>
    </location>
</feature>
<feature type="short sequence motif" description="'KMSKS' region">
    <location>
        <begin position="284"/>
        <end position="288"/>
    </location>
</feature>
<feature type="binding site" evidence="1">
    <location>
        <position position="19"/>
    </location>
    <ligand>
        <name>Zn(2+)</name>
        <dbReference type="ChEBI" id="CHEBI:29105"/>
    </ligand>
</feature>
<feature type="binding site" evidence="1">
    <location>
        <position position="213"/>
    </location>
    <ligand>
        <name>Zn(2+)</name>
        <dbReference type="ChEBI" id="CHEBI:29105"/>
    </ligand>
</feature>
<feature type="binding site" evidence="1">
    <location>
        <position position="238"/>
    </location>
    <ligand>
        <name>Zn(2+)</name>
        <dbReference type="ChEBI" id="CHEBI:29105"/>
    </ligand>
</feature>
<feature type="binding site" evidence="1">
    <location>
        <position position="242"/>
    </location>
    <ligand>
        <name>Zn(2+)</name>
        <dbReference type="ChEBI" id="CHEBI:29105"/>
    </ligand>
</feature>
<feature type="binding site" evidence="1">
    <location>
        <position position="287"/>
    </location>
    <ligand>
        <name>ATP</name>
        <dbReference type="ChEBI" id="CHEBI:30616"/>
    </ligand>
</feature>
<keyword id="KW-0030">Aminoacyl-tRNA synthetase</keyword>
<keyword id="KW-0067">ATP-binding</keyword>
<keyword id="KW-0436">Ligase</keyword>
<keyword id="KW-0479">Metal-binding</keyword>
<keyword id="KW-0547">Nucleotide-binding</keyword>
<keyword id="KW-0648">Protein biosynthesis</keyword>
<keyword id="KW-1185">Reference proteome</keyword>
<keyword id="KW-0862">Zinc</keyword>
<gene>
    <name type="primary">CARS</name>
    <name type="ordered locus">MIMI_L164</name>
</gene>
<reference key="1">
    <citation type="journal article" date="2004" name="Science">
        <title>The 1.2-megabase genome sequence of Mimivirus.</title>
        <authorList>
            <person name="Raoult D."/>
            <person name="Audic S."/>
            <person name="Robert C."/>
            <person name="Abergel C."/>
            <person name="Renesto P."/>
            <person name="Ogata H."/>
            <person name="La Scola B."/>
            <person name="Susan M."/>
            <person name="Claverie J.-M."/>
        </authorList>
    </citation>
    <scope>NUCLEOTIDE SEQUENCE [LARGE SCALE GENOMIC DNA]</scope>
    <source>
        <strain>Rowbotham-Bradford</strain>
    </source>
</reference>